<dbReference type="EMBL" id="AM942444">
    <property type="protein sequence ID" value="CAQ04675.1"/>
    <property type="molecule type" value="Genomic_DNA"/>
</dbReference>
<dbReference type="RefSeq" id="WP_012359966.1">
    <property type="nucleotide sequence ID" value="NC_010545.1"/>
</dbReference>
<dbReference type="SMR" id="B1VFY6"/>
<dbReference type="STRING" id="504474.cu0715"/>
<dbReference type="GeneID" id="60603491"/>
<dbReference type="KEGG" id="cur:cu0715"/>
<dbReference type="eggNOG" id="COG0224">
    <property type="taxonomic scope" value="Bacteria"/>
</dbReference>
<dbReference type="HOGENOM" id="CLU_050669_0_0_11"/>
<dbReference type="Proteomes" id="UP000001727">
    <property type="component" value="Chromosome"/>
</dbReference>
<dbReference type="GO" id="GO:0005886">
    <property type="term" value="C:plasma membrane"/>
    <property type="evidence" value="ECO:0007669"/>
    <property type="project" value="UniProtKB-SubCell"/>
</dbReference>
<dbReference type="GO" id="GO:0045259">
    <property type="term" value="C:proton-transporting ATP synthase complex"/>
    <property type="evidence" value="ECO:0007669"/>
    <property type="project" value="UniProtKB-KW"/>
</dbReference>
<dbReference type="GO" id="GO:0005524">
    <property type="term" value="F:ATP binding"/>
    <property type="evidence" value="ECO:0007669"/>
    <property type="project" value="UniProtKB-UniRule"/>
</dbReference>
<dbReference type="GO" id="GO:0046933">
    <property type="term" value="F:proton-transporting ATP synthase activity, rotational mechanism"/>
    <property type="evidence" value="ECO:0007669"/>
    <property type="project" value="UniProtKB-UniRule"/>
</dbReference>
<dbReference type="GO" id="GO:0042777">
    <property type="term" value="P:proton motive force-driven plasma membrane ATP synthesis"/>
    <property type="evidence" value="ECO:0007669"/>
    <property type="project" value="UniProtKB-UniRule"/>
</dbReference>
<dbReference type="CDD" id="cd12151">
    <property type="entry name" value="F1-ATPase_gamma"/>
    <property type="match status" value="1"/>
</dbReference>
<dbReference type="Gene3D" id="3.40.1380.10">
    <property type="match status" value="1"/>
</dbReference>
<dbReference type="Gene3D" id="1.10.287.80">
    <property type="entry name" value="ATP synthase, gamma subunit, helix hairpin domain"/>
    <property type="match status" value="2"/>
</dbReference>
<dbReference type="HAMAP" id="MF_00815">
    <property type="entry name" value="ATP_synth_gamma_bact"/>
    <property type="match status" value="1"/>
</dbReference>
<dbReference type="InterPro" id="IPR035968">
    <property type="entry name" value="ATP_synth_F1_ATPase_gsu"/>
</dbReference>
<dbReference type="InterPro" id="IPR000131">
    <property type="entry name" value="ATP_synth_F1_gsu"/>
</dbReference>
<dbReference type="InterPro" id="IPR023632">
    <property type="entry name" value="ATP_synth_F1_gsu_CS"/>
</dbReference>
<dbReference type="NCBIfam" id="TIGR01146">
    <property type="entry name" value="ATPsyn_F1gamma"/>
    <property type="match status" value="1"/>
</dbReference>
<dbReference type="NCBIfam" id="NF004145">
    <property type="entry name" value="PRK05621.1-2"/>
    <property type="match status" value="1"/>
</dbReference>
<dbReference type="PANTHER" id="PTHR11693">
    <property type="entry name" value="ATP SYNTHASE GAMMA CHAIN"/>
    <property type="match status" value="1"/>
</dbReference>
<dbReference type="PANTHER" id="PTHR11693:SF22">
    <property type="entry name" value="ATP SYNTHASE SUBUNIT GAMMA, MITOCHONDRIAL"/>
    <property type="match status" value="1"/>
</dbReference>
<dbReference type="Pfam" id="PF00231">
    <property type="entry name" value="ATP-synt"/>
    <property type="match status" value="1"/>
</dbReference>
<dbReference type="PRINTS" id="PR00126">
    <property type="entry name" value="ATPASEGAMMA"/>
</dbReference>
<dbReference type="SUPFAM" id="SSF52943">
    <property type="entry name" value="ATP synthase (F1-ATPase), gamma subunit"/>
    <property type="match status" value="1"/>
</dbReference>
<dbReference type="PROSITE" id="PS00153">
    <property type="entry name" value="ATPASE_GAMMA"/>
    <property type="match status" value="1"/>
</dbReference>
<name>ATPG_CORU7</name>
<protein>
    <recommendedName>
        <fullName evidence="1">ATP synthase gamma chain</fullName>
    </recommendedName>
    <alternativeName>
        <fullName evidence="1">ATP synthase F1 sector gamma subunit</fullName>
    </alternativeName>
    <alternativeName>
        <fullName evidence="1">F-ATPase gamma subunit</fullName>
    </alternativeName>
</protein>
<evidence type="ECO:0000255" key="1">
    <source>
        <dbReference type="HAMAP-Rule" id="MF_00815"/>
    </source>
</evidence>
<organism>
    <name type="scientific">Corynebacterium urealyticum (strain ATCC 43042 / DSM 7109)</name>
    <dbReference type="NCBI Taxonomy" id="504474"/>
    <lineage>
        <taxon>Bacteria</taxon>
        <taxon>Bacillati</taxon>
        <taxon>Actinomycetota</taxon>
        <taxon>Actinomycetes</taxon>
        <taxon>Mycobacteriales</taxon>
        <taxon>Corynebacteriaceae</taxon>
        <taxon>Corynebacterium</taxon>
    </lineage>
</organism>
<reference key="1">
    <citation type="journal article" date="2008" name="J. Biotechnol.">
        <title>The lifestyle of Corynebacterium urealyticum derived from its complete genome sequence established by pyrosequencing.</title>
        <authorList>
            <person name="Tauch A."/>
            <person name="Trost E."/>
            <person name="Tilker A."/>
            <person name="Ludewig U."/>
            <person name="Schneiker S."/>
            <person name="Goesmann A."/>
            <person name="Arnold W."/>
            <person name="Bekel T."/>
            <person name="Brinkrolf K."/>
            <person name="Brune I."/>
            <person name="Goetker S."/>
            <person name="Kalinowski J."/>
            <person name="Kamp P.-B."/>
            <person name="Lobo F.P."/>
            <person name="Viehoever P."/>
            <person name="Weisshaar B."/>
            <person name="Soriano F."/>
            <person name="Droege M."/>
            <person name="Puehler A."/>
        </authorList>
    </citation>
    <scope>NUCLEOTIDE SEQUENCE [LARGE SCALE GENOMIC DNA]</scope>
    <source>
        <strain>ATCC 43042 / DSM 7109</strain>
    </source>
</reference>
<feature type="chain" id="PRO_1000134130" description="ATP synthase gamma chain">
    <location>
        <begin position="1"/>
        <end position="325"/>
    </location>
</feature>
<gene>
    <name evidence="1" type="primary">atpG</name>
    <name type="ordered locus">cu0715</name>
</gene>
<proteinExistence type="inferred from homology"/>
<keyword id="KW-0066">ATP synthesis</keyword>
<keyword id="KW-1003">Cell membrane</keyword>
<keyword id="KW-0139">CF(1)</keyword>
<keyword id="KW-0375">Hydrogen ion transport</keyword>
<keyword id="KW-0406">Ion transport</keyword>
<keyword id="KW-0472">Membrane</keyword>
<keyword id="KW-1185">Reference proteome</keyword>
<keyword id="KW-0813">Transport</keyword>
<comment type="function">
    <text evidence="1">Produces ATP from ADP in the presence of a proton gradient across the membrane. The gamma chain is believed to be important in regulating ATPase activity and the flow of protons through the CF(0) complex.</text>
</comment>
<comment type="subunit">
    <text evidence="1">F-type ATPases have 2 components, CF(1) - the catalytic core - and CF(0) - the membrane proton channel. CF(1) has five subunits: alpha(3), beta(3), gamma(1), delta(1), epsilon(1). CF(0) has three main subunits: a, b and c.</text>
</comment>
<comment type="subcellular location">
    <subcellularLocation>
        <location evidence="1">Cell membrane</location>
        <topology evidence="1">Peripheral membrane protein</topology>
    </subcellularLocation>
</comment>
<comment type="similarity">
    <text evidence="1">Belongs to the ATPase gamma chain family.</text>
</comment>
<accession>B1VFY6</accession>
<sequence>MANLRELRSRIKSVNSTKKITKAQELIATSRITKAQARVDASQPYAHEITKVIERLASASSLDHKMIREPKDPKRAAILVVSSDRGMCGGYNNNVFKTTAELRKLLEDEGKEVVLYVLGSKGVTYYNFRNENISGSWTGHSQDPVYAETLNLRNHLIGGFLAGSEGTVDVVDGVNAEGDQVPGFDEVHMVYTEFHSMLSQVPKAHRLLPIKTVVEEEKMELGSDMVSDSADQVSAEVDFEPDADTLLANLLPQYVSRGIFAALLEAAASESAARRTAMSAATDNASELVENLSRIANQARQAQITQEITEIVGGASALGDSGESD</sequence>